<name>YJLC_BACSU</name>
<evidence type="ECO:0000269" key="1">
    <source>
    </source>
</evidence>
<reference key="1">
    <citation type="journal article" date="1998" name="Microbiology">
        <title>A 35.7 kb DNA fragment from the Bacillus subtilis chromosome containing a putative 12.3 kb operon involved in hexuronate catabolism and a perfectly symmetrical hypothetical catabolite-responsive element.</title>
        <authorList>
            <person name="Rivolta C."/>
            <person name="Soldo B."/>
            <person name="Lazarevic V."/>
            <person name="Joris B."/>
            <person name="Mauel C."/>
            <person name="Karamata D."/>
        </authorList>
    </citation>
    <scope>NUCLEOTIDE SEQUENCE [GENOMIC DNA]</scope>
    <source>
        <strain>168</strain>
    </source>
</reference>
<reference key="2">
    <citation type="journal article" date="1997" name="Nature">
        <title>The complete genome sequence of the Gram-positive bacterium Bacillus subtilis.</title>
        <authorList>
            <person name="Kunst F."/>
            <person name="Ogasawara N."/>
            <person name="Moszer I."/>
            <person name="Albertini A.M."/>
            <person name="Alloni G."/>
            <person name="Azevedo V."/>
            <person name="Bertero M.G."/>
            <person name="Bessieres P."/>
            <person name="Bolotin A."/>
            <person name="Borchert S."/>
            <person name="Borriss R."/>
            <person name="Boursier L."/>
            <person name="Brans A."/>
            <person name="Braun M."/>
            <person name="Brignell S.C."/>
            <person name="Bron S."/>
            <person name="Brouillet S."/>
            <person name="Bruschi C.V."/>
            <person name="Caldwell B."/>
            <person name="Capuano V."/>
            <person name="Carter N.M."/>
            <person name="Choi S.-K."/>
            <person name="Codani J.-J."/>
            <person name="Connerton I.F."/>
            <person name="Cummings N.J."/>
            <person name="Daniel R.A."/>
            <person name="Denizot F."/>
            <person name="Devine K.M."/>
            <person name="Duesterhoeft A."/>
            <person name="Ehrlich S.D."/>
            <person name="Emmerson P.T."/>
            <person name="Entian K.-D."/>
            <person name="Errington J."/>
            <person name="Fabret C."/>
            <person name="Ferrari E."/>
            <person name="Foulger D."/>
            <person name="Fritz C."/>
            <person name="Fujita M."/>
            <person name="Fujita Y."/>
            <person name="Fuma S."/>
            <person name="Galizzi A."/>
            <person name="Galleron N."/>
            <person name="Ghim S.-Y."/>
            <person name="Glaser P."/>
            <person name="Goffeau A."/>
            <person name="Golightly E.J."/>
            <person name="Grandi G."/>
            <person name="Guiseppi G."/>
            <person name="Guy B.J."/>
            <person name="Haga K."/>
            <person name="Haiech J."/>
            <person name="Harwood C.R."/>
            <person name="Henaut A."/>
            <person name="Hilbert H."/>
            <person name="Holsappel S."/>
            <person name="Hosono S."/>
            <person name="Hullo M.-F."/>
            <person name="Itaya M."/>
            <person name="Jones L.-M."/>
            <person name="Joris B."/>
            <person name="Karamata D."/>
            <person name="Kasahara Y."/>
            <person name="Klaerr-Blanchard M."/>
            <person name="Klein C."/>
            <person name="Kobayashi Y."/>
            <person name="Koetter P."/>
            <person name="Koningstein G."/>
            <person name="Krogh S."/>
            <person name="Kumano M."/>
            <person name="Kurita K."/>
            <person name="Lapidus A."/>
            <person name="Lardinois S."/>
            <person name="Lauber J."/>
            <person name="Lazarevic V."/>
            <person name="Lee S.-M."/>
            <person name="Levine A."/>
            <person name="Liu H."/>
            <person name="Masuda S."/>
            <person name="Mauel C."/>
            <person name="Medigue C."/>
            <person name="Medina N."/>
            <person name="Mellado R.P."/>
            <person name="Mizuno M."/>
            <person name="Moestl D."/>
            <person name="Nakai S."/>
            <person name="Noback M."/>
            <person name="Noone D."/>
            <person name="O'Reilly M."/>
            <person name="Ogawa K."/>
            <person name="Ogiwara A."/>
            <person name="Oudega B."/>
            <person name="Park S.-H."/>
            <person name="Parro V."/>
            <person name="Pohl T.M."/>
            <person name="Portetelle D."/>
            <person name="Porwollik S."/>
            <person name="Prescott A.M."/>
            <person name="Presecan E."/>
            <person name="Pujic P."/>
            <person name="Purnelle B."/>
            <person name="Rapoport G."/>
            <person name="Rey M."/>
            <person name="Reynolds S."/>
            <person name="Rieger M."/>
            <person name="Rivolta C."/>
            <person name="Rocha E."/>
            <person name="Roche B."/>
            <person name="Rose M."/>
            <person name="Sadaie Y."/>
            <person name="Sato T."/>
            <person name="Scanlan E."/>
            <person name="Schleich S."/>
            <person name="Schroeter R."/>
            <person name="Scoffone F."/>
            <person name="Sekiguchi J."/>
            <person name="Sekowska A."/>
            <person name="Seror S.J."/>
            <person name="Serror P."/>
            <person name="Shin B.-S."/>
            <person name="Soldo B."/>
            <person name="Sorokin A."/>
            <person name="Tacconi E."/>
            <person name="Takagi T."/>
            <person name="Takahashi H."/>
            <person name="Takemaru K."/>
            <person name="Takeuchi M."/>
            <person name="Tamakoshi A."/>
            <person name="Tanaka T."/>
            <person name="Terpstra P."/>
            <person name="Tognoni A."/>
            <person name="Tosato V."/>
            <person name="Uchiyama S."/>
            <person name="Vandenbol M."/>
            <person name="Vannier F."/>
            <person name="Vassarotti A."/>
            <person name="Viari A."/>
            <person name="Wambutt R."/>
            <person name="Wedler E."/>
            <person name="Wedler H."/>
            <person name="Weitzenegger T."/>
            <person name="Winters P."/>
            <person name="Wipat A."/>
            <person name="Yamamoto H."/>
            <person name="Yamane K."/>
            <person name="Yasumoto K."/>
            <person name="Yata K."/>
            <person name="Yoshida K."/>
            <person name="Yoshikawa H.-F."/>
            <person name="Zumstein E."/>
            <person name="Yoshikawa H."/>
            <person name="Danchin A."/>
        </authorList>
    </citation>
    <scope>NUCLEOTIDE SEQUENCE [LARGE SCALE GENOMIC DNA]</scope>
    <source>
        <strain>168</strain>
    </source>
</reference>
<reference key="3">
    <citation type="journal article" date="2006" name="J. Bacteriol.">
        <title>Regulatory loop between redox sensing of the NADH/NAD(+) ratio by rex (ydiH) and oxidation of NADH by NADH dehydrogenase ndh in Bacillus subtilis.</title>
        <authorList>
            <person name="Gyan S."/>
            <person name="Shiohira Y."/>
            <person name="Sato I."/>
            <person name="Takeuchi M."/>
            <person name="Sato T."/>
        </authorList>
    </citation>
    <scope>INDUCTION</scope>
    <source>
        <strain>168</strain>
    </source>
</reference>
<sequence length="140" mass="15583">MPETIDQTNASVSQSQQDLIDQLLKPEVQESLTVLVDQLPKLTELVNILTKSYDFAQSVATDEVLKSDTVGAITEILEPVKETAKEVAATAIEAKDRAEASNETIGLFGLLRMLKDPQAQKLFRFANSYLEVMNERENQK</sequence>
<gene>
    <name type="primary">yjlC</name>
    <name type="ordered locus">BSU12280</name>
</gene>
<organism>
    <name type="scientific">Bacillus subtilis (strain 168)</name>
    <dbReference type="NCBI Taxonomy" id="224308"/>
    <lineage>
        <taxon>Bacteria</taxon>
        <taxon>Bacillati</taxon>
        <taxon>Bacillota</taxon>
        <taxon>Bacilli</taxon>
        <taxon>Bacillales</taxon>
        <taxon>Bacillaceae</taxon>
        <taxon>Bacillus</taxon>
    </lineage>
</organism>
<keyword id="KW-1185">Reference proteome</keyword>
<comment type="induction">
    <text evidence="1">Transcriptionally regulated by sigma-A factor. Down-regulated by rex. Highest expression during the exponential growth phase.</text>
</comment>
<accession>O34633</accession>
<accession>Q796N2</accession>
<proteinExistence type="evidence at transcript level"/>
<protein>
    <recommendedName>
        <fullName>Uncharacterized protein YjlC</fullName>
    </recommendedName>
</protein>
<dbReference type="EMBL" id="AF015825">
    <property type="protein sequence ID" value="AAC46324.1"/>
    <property type="molecule type" value="Genomic_DNA"/>
</dbReference>
<dbReference type="EMBL" id="AL009126">
    <property type="protein sequence ID" value="CAB13085.1"/>
    <property type="molecule type" value="Genomic_DNA"/>
</dbReference>
<dbReference type="PIR" id="A69852">
    <property type="entry name" value="A69852"/>
</dbReference>
<dbReference type="RefSeq" id="NP_389110.1">
    <property type="nucleotide sequence ID" value="NC_000964.3"/>
</dbReference>
<dbReference type="RefSeq" id="WP_003220510.1">
    <property type="nucleotide sequence ID" value="NZ_OZ025638.1"/>
</dbReference>
<dbReference type="SMR" id="O34633"/>
<dbReference type="FunCoup" id="O34633">
    <property type="interactions" value="10"/>
</dbReference>
<dbReference type="STRING" id="224308.BSU12280"/>
<dbReference type="jPOST" id="O34633"/>
<dbReference type="PaxDb" id="224308-BSU12280"/>
<dbReference type="EnsemblBacteria" id="CAB13085">
    <property type="protein sequence ID" value="CAB13085"/>
    <property type="gene ID" value="BSU_12280"/>
</dbReference>
<dbReference type="GeneID" id="939407"/>
<dbReference type="KEGG" id="bsu:BSU12280"/>
<dbReference type="PATRIC" id="fig|224308.179.peg.1328"/>
<dbReference type="eggNOG" id="ENOG5032RCT">
    <property type="taxonomic scope" value="Bacteria"/>
</dbReference>
<dbReference type="InParanoid" id="O34633"/>
<dbReference type="OrthoDB" id="2374761at2"/>
<dbReference type="BioCyc" id="BSUB:BSU12280-MONOMER"/>
<dbReference type="Proteomes" id="UP000001570">
    <property type="component" value="Chromosome"/>
</dbReference>
<dbReference type="InterPro" id="IPR012440">
    <property type="entry name" value="DUF1641"/>
</dbReference>
<dbReference type="PANTHER" id="PTHR39180">
    <property type="match status" value="1"/>
</dbReference>
<dbReference type="PANTHER" id="PTHR39180:SF2">
    <property type="entry name" value="DUF1641 DOMAIN-CONTAINING PROTEIN"/>
    <property type="match status" value="1"/>
</dbReference>
<dbReference type="Pfam" id="PF07849">
    <property type="entry name" value="DUF1641"/>
    <property type="match status" value="1"/>
</dbReference>
<feature type="chain" id="PRO_0000389627" description="Uncharacterized protein YjlC">
    <location>
        <begin position="1"/>
        <end position="140"/>
    </location>
</feature>